<accession>O60308</accession>
<accession>A0A024R4G3</accession>
<accession>Q5JSQ3</accession>
<accession>Q5SR24</accession>
<accession>Q5SR25</accession>
<accession>Q6PKF5</accession>
<accession>Q86W32</accession>
<accession>Q86X14</accession>
<dbReference type="EMBL" id="AB011134">
    <property type="protein sequence ID" value="BAA25488.2"/>
    <property type="status" value="ALT_INIT"/>
    <property type="molecule type" value="mRNA"/>
</dbReference>
<dbReference type="EMBL" id="AL365330">
    <property type="status" value="NOT_ANNOTATED_CDS"/>
    <property type="molecule type" value="Genomic_DNA"/>
</dbReference>
<dbReference type="EMBL" id="AL691523">
    <property type="status" value="NOT_ANNOTATED_CDS"/>
    <property type="molecule type" value="Genomic_DNA"/>
</dbReference>
<dbReference type="EMBL" id="CH471130">
    <property type="protein sequence ID" value="EAW71483.1"/>
    <property type="molecule type" value="Genomic_DNA"/>
</dbReference>
<dbReference type="EMBL" id="CH471130">
    <property type="protein sequence ID" value="EAW71484.1"/>
    <property type="molecule type" value="Genomic_DNA"/>
</dbReference>
<dbReference type="EMBL" id="BC001640">
    <property type="protein sequence ID" value="AAH01640.1"/>
    <property type="status" value="ALT_SEQ"/>
    <property type="molecule type" value="mRNA"/>
</dbReference>
<dbReference type="EMBL" id="BC047450">
    <property type="protein sequence ID" value="AAH47450.1"/>
    <property type="molecule type" value="mRNA"/>
</dbReference>
<dbReference type="EMBL" id="BC050721">
    <property type="protein sequence ID" value="AAH50721.1"/>
    <property type="molecule type" value="mRNA"/>
</dbReference>
<dbReference type="CCDS" id="CCDS30571.1">
    <molecule id="O60308-1"/>
</dbReference>
<dbReference type="PIR" id="T00334">
    <property type="entry name" value="T00334"/>
</dbReference>
<dbReference type="RefSeq" id="NP_055519.1">
    <molecule id="O60308-1"/>
    <property type="nucleotide sequence ID" value="NM_014704.4"/>
</dbReference>
<dbReference type="PDB" id="5LPH">
    <property type="method" value="X-ray"/>
    <property type="resolution" value="2.25 A"/>
    <property type="chains" value="A/B=392-676"/>
</dbReference>
<dbReference type="PDB" id="5LPI">
    <property type="method" value="X-ray"/>
    <property type="resolution" value="1.80 A"/>
    <property type="chains" value="A/B/C/D=746-875"/>
</dbReference>
<dbReference type="PDBsum" id="5LPH"/>
<dbReference type="PDBsum" id="5LPI"/>
<dbReference type="SMR" id="O60308"/>
<dbReference type="BioGRID" id="115080">
    <property type="interactions" value="89"/>
</dbReference>
<dbReference type="FunCoup" id="O60308">
    <property type="interactions" value="657"/>
</dbReference>
<dbReference type="IntAct" id="O60308">
    <property type="interactions" value="80"/>
</dbReference>
<dbReference type="MINT" id="O60308"/>
<dbReference type="STRING" id="9606.ENSP00000367476"/>
<dbReference type="GlyGen" id="O60308">
    <property type="glycosylation" value="3 sites, 1 O-linked glycan (3 sites)"/>
</dbReference>
<dbReference type="iPTMnet" id="O60308"/>
<dbReference type="PhosphoSitePlus" id="O60308"/>
<dbReference type="BioMuta" id="CEP104"/>
<dbReference type="jPOST" id="O60308"/>
<dbReference type="MassIVE" id="O60308"/>
<dbReference type="PaxDb" id="9606-ENSP00000367476"/>
<dbReference type="PeptideAtlas" id="O60308"/>
<dbReference type="ProteomicsDB" id="49335">
    <molecule id="O60308-1"/>
</dbReference>
<dbReference type="ProteomicsDB" id="49336">
    <molecule id="O60308-2"/>
</dbReference>
<dbReference type="ProteomicsDB" id="49337">
    <molecule id="O60308-3"/>
</dbReference>
<dbReference type="Antibodypedia" id="26970">
    <property type="antibodies" value="93 antibodies from 16 providers"/>
</dbReference>
<dbReference type="DNASU" id="9731"/>
<dbReference type="Ensembl" id="ENST00000378223.3">
    <molecule id="O60308-2"/>
    <property type="protein sequence ID" value="ENSP00000367468.3"/>
    <property type="gene ID" value="ENSG00000116198.14"/>
</dbReference>
<dbReference type="Ensembl" id="ENST00000378230.8">
    <molecule id="O60308-1"/>
    <property type="protein sequence ID" value="ENSP00000367476.3"/>
    <property type="gene ID" value="ENSG00000116198.14"/>
</dbReference>
<dbReference type="Ensembl" id="ENST00000494653.5">
    <molecule id="O60308-3"/>
    <property type="protein sequence ID" value="ENSP00000501736.1"/>
    <property type="gene ID" value="ENSG00000116198.14"/>
</dbReference>
<dbReference type="Ensembl" id="ENST00000674558.1">
    <molecule id="O60308-1"/>
    <property type="protein sequence ID" value="ENSP00000501829.1"/>
    <property type="gene ID" value="ENSG00000116198.14"/>
</dbReference>
<dbReference type="Ensembl" id="ENST00000674623.1">
    <molecule id="O60308-1"/>
    <property type="protein sequence ID" value="ENSP00000501733.1"/>
    <property type="gene ID" value="ENSG00000116198.14"/>
</dbReference>
<dbReference type="GeneID" id="9731"/>
<dbReference type="KEGG" id="hsa:9731"/>
<dbReference type="MANE-Select" id="ENST00000378230.8">
    <property type="protein sequence ID" value="ENSP00000367476.3"/>
    <property type="RefSeq nucleotide sequence ID" value="NM_014704.4"/>
    <property type="RefSeq protein sequence ID" value="NP_055519.1"/>
</dbReference>
<dbReference type="UCSC" id="uc001aky.3">
    <molecule id="O60308-1"/>
    <property type="organism name" value="human"/>
</dbReference>
<dbReference type="AGR" id="HGNC:24866"/>
<dbReference type="CTD" id="9731"/>
<dbReference type="DisGeNET" id="9731"/>
<dbReference type="GeneCards" id="CEP104"/>
<dbReference type="GeneReviews" id="CEP104"/>
<dbReference type="HGNC" id="HGNC:24866">
    <property type="gene designation" value="CEP104"/>
</dbReference>
<dbReference type="HPA" id="ENSG00000116198">
    <property type="expression patterns" value="Low tissue specificity"/>
</dbReference>
<dbReference type="MalaCards" id="CEP104"/>
<dbReference type="MIM" id="616690">
    <property type="type" value="gene"/>
</dbReference>
<dbReference type="MIM" id="616781">
    <property type="type" value="phenotype"/>
</dbReference>
<dbReference type="MIM" id="619988">
    <property type="type" value="phenotype"/>
</dbReference>
<dbReference type="neXtProt" id="NX_O60308"/>
<dbReference type="OpenTargets" id="ENSG00000116198"/>
<dbReference type="Orphanet" id="88616">
    <property type="disease" value="Autosomal recessive non-syndromic intellectual disability"/>
</dbReference>
<dbReference type="Orphanet" id="475">
    <property type="disease" value="Joubert syndrome"/>
</dbReference>
<dbReference type="PharmGKB" id="PA144596418"/>
<dbReference type="VEuPathDB" id="HostDB:ENSG00000116198"/>
<dbReference type="eggNOG" id="KOG4825">
    <property type="taxonomic scope" value="Eukaryota"/>
</dbReference>
<dbReference type="GeneTree" id="ENSGT00390000013405"/>
<dbReference type="HOGENOM" id="CLU_003200_0_0_1"/>
<dbReference type="InParanoid" id="O60308"/>
<dbReference type="OMA" id="VQGNDYN"/>
<dbReference type="OrthoDB" id="66599at2759"/>
<dbReference type="PAN-GO" id="O60308">
    <property type="GO annotations" value="1 GO annotation based on evolutionary models"/>
</dbReference>
<dbReference type="PhylomeDB" id="O60308"/>
<dbReference type="TreeFam" id="TF323766"/>
<dbReference type="PathwayCommons" id="O60308"/>
<dbReference type="SignaLink" id="O60308"/>
<dbReference type="BioGRID-ORCS" id="9731">
    <property type="hits" value="22 hits in 1155 CRISPR screens"/>
</dbReference>
<dbReference type="CD-CODE" id="8C2F96ED">
    <property type="entry name" value="Centrosome"/>
</dbReference>
<dbReference type="ChiTaRS" id="CEP104">
    <property type="organism name" value="human"/>
</dbReference>
<dbReference type="GenomeRNAi" id="9731"/>
<dbReference type="Pharos" id="O60308">
    <property type="development level" value="Tbio"/>
</dbReference>
<dbReference type="PRO" id="PR:O60308"/>
<dbReference type="Proteomes" id="UP000005640">
    <property type="component" value="Chromosome 1"/>
</dbReference>
<dbReference type="RNAct" id="O60308">
    <property type="molecule type" value="protein"/>
</dbReference>
<dbReference type="Bgee" id="ENSG00000116198">
    <property type="expression patterns" value="Expressed in secondary oocyte and 200 other cell types or tissues"/>
</dbReference>
<dbReference type="ExpressionAtlas" id="O60308">
    <property type="expression patterns" value="baseline and differential"/>
</dbReference>
<dbReference type="GO" id="GO:0005814">
    <property type="term" value="C:centriole"/>
    <property type="evidence" value="ECO:0000314"/>
    <property type="project" value="UniProtKB"/>
</dbReference>
<dbReference type="GO" id="GO:0005813">
    <property type="term" value="C:centrosome"/>
    <property type="evidence" value="ECO:0007669"/>
    <property type="project" value="UniProtKB-SubCell"/>
</dbReference>
<dbReference type="GO" id="GO:0005929">
    <property type="term" value="C:cilium"/>
    <property type="evidence" value="ECO:0000314"/>
    <property type="project" value="UniProtKB"/>
</dbReference>
<dbReference type="GO" id="GO:0005737">
    <property type="term" value="C:cytoplasm"/>
    <property type="evidence" value="ECO:0007669"/>
    <property type="project" value="UniProtKB-KW"/>
</dbReference>
<dbReference type="GO" id="GO:0000922">
    <property type="term" value="C:spindle pole"/>
    <property type="evidence" value="ECO:0007669"/>
    <property type="project" value="UniProtKB-SubCell"/>
</dbReference>
<dbReference type="FunFam" id="1.25.10.10:FF:000200">
    <property type="entry name" value="Centrosomal protein of 104 kDa"/>
    <property type="match status" value="1"/>
</dbReference>
<dbReference type="Gene3D" id="1.25.10.10">
    <property type="entry name" value="Leucine-rich Repeat Variant"/>
    <property type="match status" value="1"/>
</dbReference>
<dbReference type="InterPro" id="IPR011989">
    <property type="entry name" value="ARM-like"/>
</dbReference>
<dbReference type="InterPro" id="IPR016024">
    <property type="entry name" value="ARM-type_fold"/>
</dbReference>
<dbReference type="InterPro" id="IPR052607">
    <property type="entry name" value="CEP104-like"/>
</dbReference>
<dbReference type="InterPro" id="IPR048739">
    <property type="entry name" value="CEP104_N"/>
</dbReference>
<dbReference type="InterPro" id="IPR048738">
    <property type="entry name" value="CEP104_Znf"/>
</dbReference>
<dbReference type="InterPro" id="IPR008979">
    <property type="entry name" value="Galactose-bd-like_sf"/>
</dbReference>
<dbReference type="InterPro" id="IPR034085">
    <property type="entry name" value="TOG"/>
</dbReference>
<dbReference type="PANTHER" id="PTHR13371:SF0">
    <property type="entry name" value="CENTROSOMAL PROTEIN OF 104 KDA"/>
    <property type="match status" value="1"/>
</dbReference>
<dbReference type="PANTHER" id="PTHR13371">
    <property type="entry name" value="GLYCINE-, GLUTAMATE-, THIENYLCYCLOHEXYLPIPERIDINE-BINDING PROTEIN"/>
    <property type="match status" value="1"/>
</dbReference>
<dbReference type="Pfam" id="PF21040">
    <property type="entry name" value="CEP104-like_TOG"/>
    <property type="match status" value="1"/>
</dbReference>
<dbReference type="Pfam" id="PF21038">
    <property type="entry name" value="CEP104_N"/>
    <property type="match status" value="1"/>
</dbReference>
<dbReference type="Pfam" id="PF21039">
    <property type="entry name" value="CEP104_ZnF"/>
    <property type="match status" value="1"/>
</dbReference>
<dbReference type="SMART" id="SM01349">
    <property type="entry name" value="TOG"/>
    <property type="match status" value="1"/>
</dbReference>
<dbReference type="SUPFAM" id="SSF48371">
    <property type="entry name" value="ARM repeat"/>
    <property type="match status" value="1"/>
</dbReference>
<dbReference type="SUPFAM" id="SSF49785">
    <property type="entry name" value="Galactose-binding domain-like"/>
    <property type="match status" value="1"/>
</dbReference>
<feature type="chain" id="PRO_0000050763" description="Centrosomal protein of 104 kDa">
    <location>
        <begin position="1"/>
        <end position="925"/>
    </location>
</feature>
<feature type="repeat" description="HEAT 1">
    <location>
        <begin position="529"/>
        <end position="567"/>
    </location>
</feature>
<feature type="repeat" description="HEAT 2">
    <location>
        <begin position="604"/>
        <end position="640"/>
    </location>
</feature>
<feature type="region of interest" description="Disordered" evidence="2">
    <location>
        <begin position="883"/>
        <end position="925"/>
    </location>
</feature>
<feature type="coiled-coil region" evidence="1">
    <location>
        <begin position="209"/>
        <end position="289"/>
    </location>
</feature>
<feature type="coiled-coil region" evidence="1">
    <location>
        <begin position="677"/>
        <end position="725"/>
    </location>
</feature>
<feature type="compositionally biased region" description="Polar residues" evidence="2">
    <location>
        <begin position="915"/>
        <end position="925"/>
    </location>
</feature>
<feature type="splice variant" id="VSP_014364" description="In isoform 2." evidence="11">
    <original>RKSDYISPLDDLAFDMYQDPEVAQIIRKLDERKREAVQKERYDYAKKLKQAIADLQ</original>
    <variation>SSVRTGGESTFGELKGPAVPSSVTLSVLGTSLGQWFPCHLPAVDDNEGTPFQRCLV</variation>
    <location>
        <begin position="189"/>
        <end position="244"/>
    </location>
</feature>
<feature type="splice variant" id="VSP_014365" description="In isoform 2." evidence="11">
    <location>
        <begin position="245"/>
        <end position="925"/>
    </location>
</feature>
<feature type="splice variant" id="VSP_014366" description="In isoform 3." evidence="11">
    <original>E</original>
    <variation>V</variation>
    <location>
        <position position="554"/>
    </location>
</feature>
<feature type="splice variant" id="VSP_014367" description="In isoform 3." evidence="11">
    <location>
        <begin position="555"/>
        <end position="925"/>
    </location>
</feature>
<feature type="sequence variant" id="VAR_087591" description="In MRT77." evidence="9">
    <location>
        <begin position="215"/>
        <end position="925"/>
    </location>
</feature>
<feature type="sequence variant" id="VAR_034036" description="In dbSNP:rs2275824.">
    <original>L</original>
    <variation>I</variation>
    <location>
        <position position="414"/>
    </location>
</feature>
<feature type="sequence variant" id="VAR_020042" description="In dbSNP:rs2275831.">
    <original>A</original>
    <variation>V</variation>
    <location>
        <position position="686"/>
    </location>
</feature>
<feature type="sequence conflict" description="In Ref. 5; AAH01640." evidence="12" ref="5">
    <original>V</original>
    <variation>L</variation>
    <location>
        <position position="51"/>
    </location>
</feature>
<feature type="sequence conflict" description="In Ref. 5; AAH47450." evidence="12" ref="5">
    <original>Y</original>
    <variation>F</variation>
    <location>
        <position position="266"/>
    </location>
</feature>
<feature type="sequence conflict" description="In Ref. 5; AAH47450." evidence="12" ref="5">
    <original>P</original>
    <variation>S</variation>
    <location>
        <position position="383"/>
    </location>
</feature>
<feature type="helix" evidence="13">
    <location>
        <begin position="422"/>
        <end position="427"/>
    </location>
</feature>
<feature type="helix" evidence="13">
    <location>
        <begin position="429"/>
        <end position="435"/>
    </location>
</feature>
<feature type="helix" evidence="13">
    <location>
        <begin position="437"/>
        <end position="444"/>
    </location>
</feature>
<feature type="helix" evidence="13">
    <location>
        <begin position="448"/>
        <end position="464"/>
    </location>
</feature>
<feature type="helix" evidence="13">
    <location>
        <begin position="471"/>
        <end position="488"/>
    </location>
</feature>
<feature type="helix" evidence="13">
    <location>
        <begin position="494"/>
        <end position="509"/>
    </location>
</feature>
<feature type="helix" evidence="13">
    <location>
        <begin position="511"/>
        <end position="514"/>
    </location>
</feature>
<feature type="helix" evidence="13">
    <location>
        <begin position="519"/>
        <end position="535"/>
    </location>
</feature>
<feature type="helix" evidence="13">
    <location>
        <begin position="536"/>
        <end position="538"/>
    </location>
</feature>
<feature type="helix" evidence="13">
    <location>
        <begin position="542"/>
        <end position="557"/>
    </location>
</feature>
<feature type="helix" evidence="13">
    <location>
        <begin position="559"/>
        <end position="562"/>
    </location>
</feature>
<feature type="turn" evidence="13">
    <location>
        <begin position="563"/>
        <end position="565"/>
    </location>
</feature>
<feature type="helix" evidence="13">
    <location>
        <begin position="566"/>
        <end position="571"/>
    </location>
</feature>
<feature type="helix" evidence="13">
    <location>
        <begin position="581"/>
        <end position="598"/>
    </location>
</feature>
<feature type="strand" evidence="13">
    <location>
        <begin position="600"/>
        <end position="604"/>
    </location>
</feature>
<feature type="helix" evidence="13">
    <location>
        <begin position="607"/>
        <end position="617"/>
    </location>
</feature>
<feature type="helix" evidence="13">
    <location>
        <begin position="623"/>
        <end position="640"/>
    </location>
</feature>
<feature type="helix" evidence="13">
    <location>
        <begin position="641"/>
        <end position="647"/>
    </location>
</feature>
<feature type="helix" evidence="13">
    <location>
        <begin position="655"/>
        <end position="657"/>
    </location>
</feature>
<feature type="helix" evidence="13">
    <location>
        <begin position="659"/>
        <end position="671"/>
    </location>
</feature>
<feature type="turn" evidence="14">
    <location>
        <begin position="747"/>
        <end position="750"/>
    </location>
</feature>
<feature type="strand" evidence="14">
    <location>
        <begin position="751"/>
        <end position="753"/>
    </location>
</feature>
<feature type="turn" evidence="14">
    <location>
        <begin position="755"/>
        <end position="757"/>
    </location>
</feature>
<feature type="helix" evidence="14">
    <location>
        <begin position="768"/>
        <end position="775"/>
    </location>
</feature>
<feature type="strand" evidence="14">
    <location>
        <begin position="780"/>
        <end position="782"/>
    </location>
</feature>
<feature type="turn" evidence="14">
    <location>
        <begin position="784"/>
        <end position="786"/>
    </location>
</feature>
<feature type="strand" evidence="14">
    <location>
        <begin position="789"/>
        <end position="791"/>
    </location>
</feature>
<feature type="helix" evidence="14">
    <location>
        <begin position="792"/>
        <end position="794"/>
    </location>
</feature>
<feature type="helix" evidence="14">
    <location>
        <begin position="795"/>
        <end position="801"/>
    </location>
</feature>
<feature type="helix" evidence="14">
    <location>
        <begin position="806"/>
        <end position="808"/>
    </location>
</feature>
<feature type="strand" evidence="14">
    <location>
        <begin position="809"/>
        <end position="811"/>
    </location>
</feature>
<feature type="turn" evidence="14">
    <location>
        <begin position="813"/>
        <end position="815"/>
    </location>
</feature>
<feature type="strand" evidence="14">
    <location>
        <begin position="818"/>
        <end position="820"/>
    </location>
</feature>
<feature type="helix" evidence="14">
    <location>
        <begin position="821"/>
        <end position="823"/>
    </location>
</feature>
<feature type="helix" evidence="14">
    <location>
        <begin position="824"/>
        <end position="830"/>
    </location>
</feature>
<feature type="turn" evidence="14">
    <location>
        <begin position="839"/>
        <end position="841"/>
    </location>
</feature>
<feature type="turn" evidence="14">
    <location>
        <begin position="846"/>
        <end position="848"/>
    </location>
</feature>
<feature type="helix" evidence="14">
    <location>
        <begin position="856"/>
        <end position="864"/>
    </location>
</feature>
<gene>
    <name type="primary">CEP104</name>
    <name type="synonym">KIAA0562</name>
</gene>
<protein>
    <recommendedName>
        <fullName>Centrosomal protein of 104 kDa</fullName>
        <shortName>Cep104</shortName>
    </recommendedName>
</protein>
<sequence length="925" mass="104448">MPHKIGFVVVSSSGHEDGFSARELMIHAPTVSGWRSPRFCQFPQEIVLQMVERCRIRKLQLLAHQYMISSKIEFYISESLPEYFAPYQAERFRRLGYVSLCDNEKTGCKARELKSVYVDAVGQFLKLIFHQNHVNKYNIYNQVALVAINIIGDPADFSDESNTASREKLIDHYLGHNSEDPALEGTYARKSDYISPLDDLAFDMYQDPEVAQIIRKLDERKREAVQKERYDYAKKLKQAIADLQKVGERLGRYEVEKRCAVEKEDYDLAKEKKQQMEQYRAEVYEQLELHSLLDAELMRRPFDLPLQPLARSGSPCHQKPMPSLPQLEERGTENQFAEPFLQEKPSSYSLTISPQHSAVDPLLPATDPHPKINAESLPYDERPLPAIRKHYGEAVVEPEMSNADISDARRGGMLGEPEPLTEKALREASSAIDVLGETLVAEAYCKTWSYREDALLALSKKLMEMPVGTPKEDLKNTLRASVFLVRRAIKDIVTSVFQASLKLLKMIITQYIPKHKLSKLETAHCVERTIPVLLTRTGDSSARLRVTAANFIQEMALFKEVKSLQIIPSYLVQPLKANSSVHLAMSQMGLLARLLKDLGTGSSGFTIDNVMKFSVSALEHRVYEVRETAVRIILDMYRQHQASILEYLPPDDSNTRRNILYKTIFEGFAKIDGRATDAEMRARRKAATEEAEKQKKEEIKALQGQLAALKEIQAEVQEKESDAVKPKNQDIQGGKAAPAEALGIPDEHYLDNLCIFCGERSESFTEEGLDLHYWKHCLMLTRCDHCKQVVEISSLTEHLLTECDKKDGFGKCYRCSEAVFKEELPRHIKHKDCNPAKPEKLANRCPLCHENFSPGEEAWKAHLMGPAGCTMNLRKTHILQKAPALQPGKSSAVAASGPLGSKAGSKIPTPKGGLSKSSSRTYAKR</sequence>
<proteinExistence type="evidence at protein level"/>
<evidence type="ECO:0000255" key="1"/>
<evidence type="ECO:0000256" key="2">
    <source>
        <dbReference type="SAM" id="MobiDB-lite"/>
    </source>
</evidence>
<evidence type="ECO:0000269" key="3">
    <source>
    </source>
</evidence>
<evidence type="ECO:0000269" key="4">
    <source>
    </source>
</evidence>
<evidence type="ECO:0000269" key="5">
    <source>
    </source>
</evidence>
<evidence type="ECO:0000269" key="6">
    <source>
    </source>
</evidence>
<evidence type="ECO:0000269" key="7">
    <source>
    </source>
</evidence>
<evidence type="ECO:0000269" key="8">
    <source>
    </source>
</evidence>
<evidence type="ECO:0000269" key="9">
    <source>
    </source>
</evidence>
<evidence type="ECO:0000269" key="10">
    <source>
    </source>
</evidence>
<evidence type="ECO:0000303" key="11">
    <source>
    </source>
</evidence>
<evidence type="ECO:0000305" key="12"/>
<evidence type="ECO:0007829" key="13">
    <source>
        <dbReference type="PDB" id="5LPH"/>
    </source>
</evidence>
<evidence type="ECO:0007829" key="14">
    <source>
        <dbReference type="PDB" id="5LPI"/>
    </source>
</evidence>
<comment type="function">
    <text evidence="5">Required for ciliogenesis and for structural integrity at the ciliary tip.</text>
</comment>
<comment type="subunit">
    <text evidence="4 7 10">Interacts with CCP110 and CEP97. Interacts with ARMC9, TOGARAM1, CCDC66 and CSPP1 (PubMed:32453716, PubMed:36606424).</text>
</comment>
<comment type="interaction">
    <interactant intactId="EBI-2685240">
        <id>O60308</id>
    </interactant>
    <interactant intactId="EBI-744603">
        <id>Q15637</id>
        <label>SF1</label>
    </interactant>
    <organismsDiffer>false</organismsDiffer>
    <experiments>4</experiments>
</comment>
<comment type="subcellular location">
    <subcellularLocation>
        <location evidence="5 10">Cell projection</location>
        <location evidence="5 10">Cilium</location>
    </subcellularLocation>
    <subcellularLocation>
        <location evidence="3 5">Cytoplasm</location>
        <location evidence="3 5">Cytoskeleton</location>
        <location evidence="3 5">Microtubule organizing center</location>
        <location evidence="3 5">Centrosome</location>
        <location evidence="3 5">Centriole</location>
    </subcellularLocation>
    <subcellularLocation>
        <location evidence="5">Cytoplasm</location>
        <location evidence="5">Cytoskeleton</location>
        <location evidence="5">Microtubule organizing center</location>
        <location evidence="5">Centrosome</location>
    </subcellularLocation>
    <subcellularLocation>
        <location>Cytoplasm</location>
        <location>Cytoskeleton</location>
        <location>Spindle pole</location>
    </subcellularLocation>
    <text evidence="5">In interphase non-ciliated cells, localizes to the distal ends of both the mother and daughter centrioles. In ciliated cells, present at the distal end of the daughter centriole, but not on the mother centriole, and at the tip of primary cilium. Localization at the ciliary tip is also observed in motile cilia. Throughout S phase, associated with both mother and daughter centrioles in each centrosome. During metaphase and telophase, present at both spindle poles.</text>
</comment>
<comment type="alternative products">
    <event type="alternative splicing"/>
    <isoform>
        <id>O60308-1</id>
        <name>1</name>
        <sequence type="displayed"/>
    </isoform>
    <isoform>
        <id>O60308-2</id>
        <name>2</name>
        <sequence type="described" ref="VSP_014364 VSP_014365"/>
    </isoform>
    <isoform>
        <id>O60308-3</id>
        <name>3</name>
        <sequence type="described" ref="VSP_014366 VSP_014367"/>
    </isoform>
</comment>
<comment type="disease" evidence="6">
    <disease id="DI-04607">
        <name>Joubert syndrome 25</name>
        <acronym>JBTS25</acronym>
        <description>A form of Joubert syndrome, a disorder presenting with cerebellar ataxia, oculomotor apraxia, hypotonia, neonatal breathing abnormalities and psychomotor delay. Neuroradiologically, it is characterized by cerebellar vermian hypoplasia/aplasia, thickened and reoriented superior cerebellar peduncles, and an abnormally large interpeduncular fossa, giving the appearance of a molar tooth on transaxial slices (molar tooth sign). Additional variable features include retinal dystrophy, renal disease, liver fibrosis, and polydactyly. JBTS25 clinical manifestations appear to be confined to the neurologic system. JBTS25 inheritance is autosomal recessive.</description>
        <dbReference type="MIM" id="616781"/>
    </disease>
    <text>The disease is caused by variants affecting the gene represented in this entry.</text>
</comment>
<comment type="disease" evidence="8 9">
    <disease id="DI-06477">
        <name>Intellectual developmental disorder, autosomal recessive 77</name>
        <acronym>MRT77</acronym>
        <description>An autosomal recessive neurodevelopmental disorder apparent from infancy and characterized by global developmental delay, variably impaired cognitive development, delayed walking, and poor speech in some cases.</description>
        <dbReference type="MIM" id="619988"/>
    </disease>
    <text>The disease is caused by variants affecting the gene represented in this entry.</text>
</comment>
<comment type="sequence caution" evidence="12">
    <conflict type="miscellaneous discrepancy">
        <sequence resource="EMBL-CDS" id="AAH01640"/>
    </conflict>
    <text>Contaminating sequence. Potential poly-A sequence.</text>
</comment>
<comment type="sequence caution" evidence="12">
    <conflict type="erroneous initiation">
        <sequence resource="EMBL-CDS" id="BAA25488"/>
    </conflict>
    <text>Extended N-terminus.</text>
</comment>
<reference key="1">
    <citation type="journal article" date="1998" name="DNA Res.">
        <title>Prediction of the coding sequences of unidentified human genes. IX. The complete sequences of 100 new cDNA clones from brain which can code for large proteins in vitro.</title>
        <authorList>
            <person name="Nagase T."/>
            <person name="Ishikawa K."/>
            <person name="Miyajima N."/>
            <person name="Tanaka A."/>
            <person name="Kotani H."/>
            <person name="Nomura N."/>
            <person name="Ohara O."/>
        </authorList>
    </citation>
    <scope>NUCLEOTIDE SEQUENCE [LARGE SCALE MRNA] (ISOFORM 1)</scope>
    <source>
        <tissue>Brain</tissue>
    </source>
</reference>
<reference key="2">
    <citation type="submission" date="2004-01" db="EMBL/GenBank/DDBJ databases">
        <authorList>
            <person name="Nagase T."/>
            <person name="Ishikawa K."/>
            <person name="Miyajima N."/>
            <person name="Tanaka A."/>
            <person name="Kotani H."/>
            <person name="Nomura N."/>
            <person name="Ohara O."/>
        </authorList>
    </citation>
    <scope>SEQUENCE REVISION TO N-TERMINUS</scope>
</reference>
<reference key="3">
    <citation type="journal article" date="2006" name="Nature">
        <title>The DNA sequence and biological annotation of human chromosome 1.</title>
        <authorList>
            <person name="Gregory S.G."/>
            <person name="Barlow K.F."/>
            <person name="McLay K.E."/>
            <person name="Kaul R."/>
            <person name="Swarbreck D."/>
            <person name="Dunham A."/>
            <person name="Scott C.E."/>
            <person name="Howe K.L."/>
            <person name="Woodfine K."/>
            <person name="Spencer C.C.A."/>
            <person name="Jones M.C."/>
            <person name="Gillson C."/>
            <person name="Searle S."/>
            <person name="Zhou Y."/>
            <person name="Kokocinski F."/>
            <person name="McDonald L."/>
            <person name="Evans R."/>
            <person name="Phillips K."/>
            <person name="Atkinson A."/>
            <person name="Cooper R."/>
            <person name="Jones C."/>
            <person name="Hall R.E."/>
            <person name="Andrews T.D."/>
            <person name="Lloyd C."/>
            <person name="Ainscough R."/>
            <person name="Almeida J.P."/>
            <person name="Ambrose K.D."/>
            <person name="Anderson F."/>
            <person name="Andrew R.W."/>
            <person name="Ashwell R.I.S."/>
            <person name="Aubin K."/>
            <person name="Babbage A.K."/>
            <person name="Bagguley C.L."/>
            <person name="Bailey J."/>
            <person name="Beasley H."/>
            <person name="Bethel G."/>
            <person name="Bird C.P."/>
            <person name="Bray-Allen S."/>
            <person name="Brown J.Y."/>
            <person name="Brown A.J."/>
            <person name="Buckley D."/>
            <person name="Burton J."/>
            <person name="Bye J."/>
            <person name="Carder C."/>
            <person name="Chapman J.C."/>
            <person name="Clark S.Y."/>
            <person name="Clarke G."/>
            <person name="Clee C."/>
            <person name="Cobley V."/>
            <person name="Collier R.E."/>
            <person name="Corby N."/>
            <person name="Coville G.J."/>
            <person name="Davies J."/>
            <person name="Deadman R."/>
            <person name="Dunn M."/>
            <person name="Earthrowl M."/>
            <person name="Ellington A.G."/>
            <person name="Errington H."/>
            <person name="Frankish A."/>
            <person name="Frankland J."/>
            <person name="French L."/>
            <person name="Garner P."/>
            <person name="Garnett J."/>
            <person name="Gay L."/>
            <person name="Ghori M.R.J."/>
            <person name="Gibson R."/>
            <person name="Gilby L.M."/>
            <person name="Gillett W."/>
            <person name="Glithero R.J."/>
            <person name="Grafham D.V."/>
            <person name="Griffiths C."/>
            <person name="Griffiths-Jones S."/>
            <person name="Grocock R."/>
            <person name="Hammond S."/>
            <person name="Harrison E.S.I."/>
            <person name="Hart E."/>
            <person name="Haugen E."/>
            <person name="Heath P.D."/>
            <person name="Holmes S."/>
            <person name="Holt K."/>
            <person name="Howden P.J."/>
            <person name="Hunt A.R."/>
            <person name="Hunt S.E."/>
            <person name="Hunter G."/>
            <person name="Isherwood J."/>
            <person name="James R."/>
            <person name="Johnson C."/>
            <person name="Johnson D."/>
            <person name="Joy A."/>
            <person name="Kay M."/>
            <person name="Kershaw J.K."/>
            <person name="Kibukawa M."/>
            <person name="Kimberley A.M."/>
            <person name="King A."/>
            <person name="Knights A.J."/>
            <person name="Lad H."/>
            <person name="Laird G."/>
            <person name="Lawlor S."/>
            <person name="Leongamornlert D.A."/>
            <person name="Lloyd D.M."/>
            <person name="Loveland J."/>
            <person name="Lovell J."/>
            <person name="Lush M.J."/>
            <person name="Lyne R."/>
            <person name="Martin S."/>
            <person name="Mashreghi-Mohammadi M."/>
            <person name="Matthews L."/>
            <person name="Matthews N.S.W."/>
            <person name="McLaren S."/>
            <person name="Milne S."/>
            <person name="Mistry S."/>
            <person name="Moore M.J.F."/>
            <person name="Nickerson T."/>
            <person name="O'Dell C.N."/>
            <person name="Oliver K."/>
            <person name="Palmeiri A."/>
            <person name="Palmer S.A."/>
            <person name="Parker A."/>
            <person name="Patel D."/>
            <person name="Pearce A.V."/>
            <person name="Peck A.I."/>
            <person name="Pelan S."/>
            <person name="Phelps K."/>
            <person name="Phillimore B.J."/>
            <person name="Plumb R."/>
            <person name="Rajan J."/>
            <person name="Raymond C."/>
            <person name="Rouse G."/>
            <person name="Saenphimmachak C."/>
            <person name="Sehra H.K."/>
            <person name="Sheridan E."/>
            <person name="Shownkeen R."/>
            <person name="Sims S."/>
            <person name="Skuce C.D."/>
            <person name="Smith M."/>
            <person name="Steward C."/>
            <person name="Subramanian S."/>
            <person name="Sycamore N."/>
            <person name="Tracey A."/>
            <person name="Tromans A."/>
            <person name="Van Helmond Z."/>
            <person name="Wall M."/>
            <person name="Wallis J.M."/>
            <person name="White S."/>
            <person name="Whitehead S.L."/>
            <person name="Wilkinson J.E."/>
            <person name="Willey D.L."/>
            <person name="Williams H."/>
            <person name="Wilming L."/>
            <person name="Wray P.W."/>
            <person name="Wu Z."/>
            <person name="Coulson A."/>
            <person name="Vaudin M."/>
            <person name="Sulston J.E."/>
            <person name="Durbin R.M."/>
            <person name="Hubbard T."/>
            <person name="Wooster R."/>
            <person name="Dunham I."/>
            <person name="Carter N.P."/>
            <person name="McVean G."/>
            <person name="Ross M.T."/>
            <person name="Harrow J."/>
            <person name="Olson M.V."/>
            <person name="Beck S."/>
            <person name="Rogers J."/>
            <person name="Bentley D.R."/>
        </authorList>
    </citation>
    <scope>NUCLEOTIDE SEQUENCE [LARGE SCALE GENOMIC DNA]</scope>
</reference>
<reference key="4">
    <citation type="submission" date="2005-07" db="EMBL/GenBank/DDBJ databases">
        <authorList>
            <person name="Mural R.J."/>
            <person name="Istrail S."/>
            <person name="Sutton G.G."/>
            <person name="Florea L."/>
            <person name="Halpern A.L."/>
            <person name="Mobarry C.M."/>
            <person name="Lippert R."/>
            <person name="Walenz B."/>
            <person name="Shatkay H."/>
            <person name="Dew I."/>
            <person name="Miller J.R."/>
            <person name="Flanigan M.J."/>
            <person name="Edwards N.J."/>
            <person name="Bolanos R."/>
            <person name="Fasulo D."/>
            <person name="Halldorsson B.V."/>
            <person name="Hannenhalli S."/>
            <person name="Turner R."/>
            <person name="Yooseph S."/>
            <person name="Lu F."/>
            <person name="Nusskern D.R."/>
            <person name="Shue B.C."/>
            <person name="Zheng X.H."/>
            <person name="Zhong F."/>
            <person name="Delcher A.L."/>
            <person name="Huson D.H."/>
            <person name="Kravitz S.A."/>
            <person name="Mouchard L."/>
            <person name="Reinert K."/>
            <person name="Remington K.A."/>
            <person name="Clark A.G."/>
            <person name="Waterman M.S."/>
            <person name="Eichler E.E."/>
            <person name="Adams M.D."/>
            <person name="Hunkapiller M.W."/>
            <person name="Myers E.W."/>
            <person name="Venter J.C."/>
        </authorList>
    </citation>
    <scope>NUCLEOTIDE SEQUENCE [LARGE SCALE GENOMIC DNA]</scope>
</reference>
<reference key="5">
    <citation type="journal article" date="2004" name="Genome Res.">
        <title>The status, quality, and expansion of the NIH full-length cDNA project: the Mammalian Gene Collection (MGC).</title>
        <authorList>
            <consortium name="The MGC Project Team"/>
        </authorList>
    </citation>
    <scope>NUCLEOTIDE SEQUENCE [LARGE SCALE MRNA] (ISOFORMS 1; 2 AND 3)</scope>
    <source>
        <tissue>Kidney</tissue>
        <tissue>Skin</tissue>
        <tissue>Testis</tissue>
    </source>
</reference>
<reference key="6">
    <citation type="journal article" date="2011" name="EMBO J.">
        <title>Novel asymmetrically localizing components of human centrosomes identified by complementary proteomics methods.</title>
        <authorList>
            <person name="Jakobsen L."/>
            <person name="Vanselow K."/>
            <person name="Skogs M."/>
            <person name="Toyoda Y."/>
            <person name="Lundberg E."/>
            <person name="Poser I."/>
            <person name="Falkenby L.G."/>
            <person name="Bennetzen M."/>
            <person name="Westendorf J."/>
            <person name="Nigg E.A."/>
            <person name="Uhlen M."/>
            <person name="Hyman A.A."/>
            <person name="Andersen J.S."/>
        </authorList>
    </citation>
    <scope>IDENTIFICATION BY MASS SPECTROMETRY</scope>
    <scope>SUBCELLULAR LOCATION</scope>
</reference>
<reference key="7">
    <citation type="journal article" date="2012" name="Curr. Biol.">
        <title>A proteome-wide screen for mammalian SxIP motif-containing microtubule plus-end tracking proteins.</title>
        <authorList>
            <person name="Jiang K."/>
            <person name="Toedt G."/>
            <person name="Montenegro Gouveia S."/>
            <person name="Davey N.E."/>
            <person name="Hua S."/>
            <person name="van der Vaart B."/>
            <person name="Grigoriev I."/>
            <person name="Larsen J."/>
            <person name="Pedersen L.B."/>
            <person name="Bezstarosti K."/>
            <person name="Lince-Faria M."/>
            <person name="Demmers J."/>
            <person name="Steinmetz M.O."/>
            <person name="Gibson T.J."/>
            <person name="Akhmanova A."/>
        </authorList>
    </citation>
    <scope>INTERACTION WITH CCP110 AND CEP97</scope>
</reference>
<reference key="8">
    <citation type="journal article" date="2013" name="J. Cell Sci.">
        <title>Centrosomal protein CEP104 (Chlamydomonas FAP256) moves to the ciliary tip during ciliary assembly.</title>
        <authorList>
            <person name="Satish Tammana T.V."/>
            <person name="Tammana D."/>
            <person name="Diener D.R."/>
            <person name="Rosenbaum J."/>
        </authorList>
    </citation>
    <scope>FUNCTION</scope>
    <scope>SUBCELLULAR LOCATION</scope>
</reference>
<reference key="9">
    <citation type="journal article" date="2015" name="Am. J. Hum. Genet.">
        <title>Joubert Syndrome in French Canadians and Identification of Mutations in CEP104.</title>
        <authorList>
            <consortium name="Care4Rare Canada Consortium"/>
            <person name="Srour M."/>
            <person name="Hamdan F.F."/>
            <person name="McKnight D."/>
            <person name="Davis E."/>
            <person name="Mandel H."/>
            <person name="Schwartzentruber J."/>
            <person name="Martin B."/>
            <person name="Patry L."/>
            <person name="Nassif C."/>
            <person name="Dionne-Laporte A."/>
            <person name="Ospina L.H."/>
            <person name="Lemyre E."/>
            <person name="Massicotte C."/>
            <person name="Laframboise R."/>
            <person name="Maranda B."/>
            <person name="Labuda D."/>
            <person name="Decarie J.C."/>
            <person name="Rypens F."/>
            <person name="Goldsher D."/>
            <person name="Fallet-Bianco C."/>
            <person name="Soucy J.F."/>
            <person name="Laberge A.M."/>
            <person name="Maftei C."/>
            <person name="Boycott K."/>
            <person name="Brais B."/>
            <person name="Boucher R.M."/>
            <person name="Rouleau G.A."/>
            <person name="Katsanis N."/>
            <person name="Majewski J."/>
            <person name="Elpeleg O."/>
            <person name="Kukolich M.K."/>
            <person name="Shalev S."/>
            <person name="Michaud J.L."/>
        </authorList>
    </citation>
    <scope>INVOLVEMENT IN JBTS25</scope>
</reference>
<reference key="10">
    <citation type="journal article" date="2020" name="J. Clin. Invest.">
        <title>Dysfunction of the ciliary ARMC9/TOGARAM1 protein module causes Joubert syndrome.</title>
        <authorList>
            <consortium name="University of Washington Center for Mendelian Genomics"/>
            <consortium name="Genomics England Research Consortium"/>
            <person name="Latour B.L."/>
            <person name="Van De Weghe J.C."/>
            <person name="Rusterholz T.D."/>
            <person name="Letteboer S.J."/>
            <person name="Gomez A."/>
            <person name="Shaheen R."/>
            <person name="Gesemann M."/>
            <person name="Karamzade A."/>
            <person name="Asadollahi M."/>
            <person name="Barroso-Gil M."/>
            <person name="Chitre M."/>
            <person name="Grout M.E."/>
            <person name="van Reeuwijk J."/>
            <person name="van Beersum S.E."/>
            <person name="Miller C.V."/>
            <person name="Dempsey J.C."/>
            <person name="Morsy H."/>
            <person name="Bamshad M.J."/>
            <person name="Nickerson D.A."/>
            <person name="Neuhauss S.C."/>
            <person name="Boldt K."/>
            <person name="Ueffing M."/>
            <person name="Keramatipour M."/>
            <person name="Sayer J.A."/>
            <person name="Alkuraya F.S."/>
            <person name="Bachmann-Gagescu R."/>
            <person name="Roepman R."/>
            <person name="Doherty D."/>
        </authorList>
    </citation>
    <scope>INTERACTION WITH ARMC9; TOGARAM1; CCDC66 AND CSPP1</scope>
</reference>
<reference key="11">
    <citation type="journal article" date="2023" name="J. Cell Sci.">
        <title>CCDC66 regulates primary cilium length and signaling via interactions with transition zone and axonemal proteins.</title>
        <authorList>
            <person name="Odabasi E."/>
            <person name="Conkar D."/>
            <person name="Deretic J."/>
            <person name="Batman U."/>
            <person name="Frikstad K.M."/>
            <person name="Patzke S."/>
            <person name="Firat-Karalar E.N."/>
        </authorList>
    </citation>
    <scope>SUBCELLULAR LOCATION</scope>
    <scope>INTERACTION WITH CCDC66</scope>
</reference>
<reference key="12">
    <citation type="journal article" date="2021" name="Arch. Iran. Med.">
        <title>CEP104 and CEP290; Genes with Ciliary Functions Cause Intellectual Disability in Multiple Families.</title>
        <authorList>
            <person name="Khoshbakht S."/>
            <person name="Beheshtian M."/>
            <person name="Fattahi Z."/>
            <person name="Bazazzadegan N."/>
            <person name="Parsimehr E."/>
            <person name="Fadaee M."/>
            <person name="Vazehan R."/>
            <person name="Faraji Zonooz M."/>
            <person name="Abolhassani A."/>
            <person name="Makvand M."/>
            <person name="Kariminejad A."/>
            <person name="Celik A."/>
            <person name="Kahrizi K."/>
            <person name="Najmabadi H."/>
        </authorList>
    </citation>
    <scope>INVOLVEMENT IN MRT77</scope>
</reference>
<reference key="13">
    <citation type="journal article" date="2022" name="Mol. Biol. Rep.">
        <title>CEP104 gene may involve in the pathogenesis of a new developmental disorder other than joubert syndrome.</title>
        <authorList>
            <person name="Badv R.S."/>
            <person name="Mahdiannasser M."/>
            <person name="Rasoulinezhad M."/>
            <person name="Habibi L."/>
            <person name="Rashidi-Nezhad A."/>
        </authorList>
    </citation>
    <scope>VARIANT MRT77 215-ARG--ARG-925 DEL</scope>
</reference>
<organism>
    <name type="scientific">Homo sapiens</name>
    <name type="common">Human</name>
    <dbReference type="NCBI Taxonomy" id="9606"/>
    <lineage>
        <taxon>Eukaryota</taxon>
        <taxon>Metazoa</taxon>
        <taxon>Chordata</taxon>
        <taxon>Craniata</taxon>
        <taxon>Vertebrata</taxon>
        <taxon>Euteleostomi</taxon>
        <taxon>Mammalia</taxon>
        <taxon>Eutheria</taxon>
        <taxon>Euarchontoglires</taxon>
        <taxon>Primates</taxon>
        <taxon>Haplorrhini</taxon>
        <taxon>Catarrhini</taxon>
        <taxon>Hominidae</taxon>
        <taxon>Homo</taxon>
    </lineage>
</organism>
<keyword id="KW-0002">3D-structure</keyword>
<keyword id="KW-0025">Alternative splicing</keyword>
<keyword id="KW-0966">Cell projection</keyword>
<keyword id="KW-1186">Ciliopathy</keyword>
<keyword id="KW-0175">Coiled coil</keyword>
<keyword id="KW-0963">Cytoplasm</keyword>
<keyword id="KW-0206">Cytoskeleton</keyword>
<keyword id="KW-0225">Disease variant</keyword>
<keyword id="KW-0991">Intellectual disability</keyword>
<keyword id="KW-0979">Joubert syndrome</keyword>
<keyword id="KW-1267">Proteomics identification</keyword>
<keyword id="KW-1185">Reference proteome</keyword>
<keyword id="KW-0677">Repeat</keyword>
<name>CE104_HUMAN</name>